<organism>
    <name type="scientific">Sulfolobus acidocaldarius (strain ATCC 33909 / DSM 639 / JCM 8929 / NBRC 15157 / NCIMB 11770)</name>
    <dbReference type="NCBI Taxonomy" id="330779"/>
    <lineage>
        <taxon>Archaea</taxon>
        <taxon>Thermoproteota</taxon>
        <taxon>Thermoprotei</taxon>
        <taxon>Sulfolobales</taxon>
        <taxon>Sulfolobaceae</taxon>
        <taxon>Sulfolobus</taxon>
    </lineage>
</organism>
<sequence length="178" mass="20165">MSMQEAKKENVMRRVVLDKVTVNIGVGESGERLQKAYQLVQELTGVKPVYTKGRKSIREFGVRKGAPIGVKATLRRQAAVEFLKKVLPAVNFRLKQSSFDNYGNVSFGIAEHVLIPGTRYDPEIGIFGMDVAITLVRPGYRTMKRKRKKASIPRRHRVTKEEAINFMKENFNVTILEG</sequence>
<reference key="1">
    <citation type="journal article" date="1991" name="Biochimie">
        <title>The structure of the gene for ribosomal protein L5 in the archaebacterium Sulfolobus acidocaldarius.</title>
        <authorList>
            <person name="Yang D."/>
            <person name="Guenther I."/>
            <person name="Matheson A.T."/>
            <person name="Auer J."/>
            <person name="Spicker G."/>
            <person name="Boeck A."/>
        </authorList>
    </citation>
    <scope>NUCLEOTIDE SEQUENCE [GENOMIC DNA]</scope>
</reference>
<reference key="2">
    <citation type="journal article" date="1999" name="Mol. Phylogenet. Evol.">
        <title>The structure and evolution of the ribosomal proteins encoded in the spc operon of the archaeon (Crenarchaeota) Sulfolobus acidocaldarius.</title>
        <authorList>
            <person name="Yang D."/>
            <person name="Kusser I."/>
            <person name="Koepke A.K."/>
            <person name="Koop B.F."/>
            <person name="Matheson A.T."/>
        </authorList>
    </citation>
    <scope>NUCLEOTIDE SEQUENCE [GENOMIC DNA]</scope>
    <source>
        <strain>ATCC 33909 / DSM 639 / JCM 8929 / NBRC 15157 / NCIMB 11770</strain>
    </source>
</reference>
<reference key="3">
    <citation type="journal article" date="2005" name="J. Bacteriol.">
        <title>The genome of Sulfolobus acidocaldarius, a model organism of the Crenarchaeota.</title>
        <authorList>
            <person name="Chen L."/>
            <person name="Bruegger K."/>
            <person name="Skovgaard M."/>
            <person name="Redder P."/>
            <person name="She Q."/>
            <person name="Torarinsson E."/>
            <person name="Greve B."/>
            <person name="Awayez M."/>
            <person name="Zibat A."/>
            <person name="Klenk H.-P."/>
            <person name="Garrett R.A."/>
        </authorList>
    </citation>
    <scope>NUCLEOTIDE SEQUENCE [LARGE SCALE GENOMIC DNA]</scope>
    <source>
        <strain>ATCC 33909 / DSM 639 / JCM 8929 / NBRC 15157 / NCIMB 11770</strain>
    </source>
</reference>
<dbReference type="EMBL" id="S77838">
    <property type="protein sequence ID" value="AAB21095.1"/>
    <property type="molecule type" value="Genomic_DNA"/>
</dbReference>
<dbReference type="EMBL" id="Y07778">
    <property type="protein sequence ID" value="CAA69090.1"/>
    <property type="molecule type" value="Genomic_DNA"/>
</dbReference>
<dbReference type="EMBL" id="CP000077">
    <property type="protein sequence ID" value="AAY79976.1"/>
    <property type="molecule type" value="Genomic_DNA"/>
</dbReference>
<dbReference type="RefSeq" id="WP_011277478.1">
    <property type="nucleotide sequence ID" value="NC_007181.1"/>
</dbReference>
<dbReference type="PDB" id="8HKU">
    <property type="method" value="EM"/>
    <property type="resolution" value="2.72 A"/>
    <property type="chains" value="AL5P=8-175"/>
</dbReference>
<dbReference type="PDB" id="8HKV">
    <property type="method" value="EM"/>
    <property type="resolution" value="4.94 A"/>
    <property type="chains" value="AL5P=8-175"/>
</dbReference>
<dbReference type="PDB" id="8HKY">
    <property type="method" value="EM"/>
    <property type="resolution" value="4.45 A"/>
    <property type="chains" value="AL5P=8-175"/>
</dbReference>
<dbReference type="PDB" id="8HKZ">
    <property type="method" value="EM"/>
    <property type="resolution" value="4.78 A"/>
    <property type="chains" value="AL5P=8-175"/>
</dbReference>
<dbReference type="PDB" id="8HL1">
    <property type="method" value="EM"/>
    <property type="resolution" value="3.93 A"/>
    <property type="chains" value="AL5P=8-175"/>
</dbReference>
<dbReference type="PDB" id="8HL2">
    <property type="method" value="EM"/>
    <property type="resolution" value="4.10 A"/>
    <property type="chains" value="AL5P=8-175"/>
</dbReference>
<dbReference type="PDB" id="8HL3">
    <property type="method" value="EM"/>
    <property type="resolution" value="4.80 A"/>
    <property type="chains" value="AL5P=8-175"/>
</dbReference>
<dbReference type="PDB" id="8HL4">
    <property type="method" value="EM"/>
    <property type="resolution" value="4.62 A"/>
    <property type="chains" value="AL5P=8-175"/>
</dbReference>
<dbReference type="PDB" id="8HL5">
    <property type="method" value="EM"/>
    <property type="resolution" value="5.72 A"/>
    <property type="chains" value="AL5P=8-175"/>
</dbReference>
<dbReference type="PDBsum" id="8HKU"/>
<dbReference type="PDBsum" id="8HKV"/>
<dbReference type="PDBsum" id="8HKY"/>
<dbReference type="PDBsum" id="8HKZ"/>
<dbReference type="PDBsum" id="8HL1"/>
<dbReference type="PDBsum" id="8HL2"/>
<dbReference type="PDBsum" id="8HL3"/>
<dbReference type="PDBsum" id="8HL4"/>
<dbReference type="PDBsum" id="8HL5"/>
<dbReference type="EMDB" id="EMD-34860"/>
<dbReference type="EMDB" id="EMD-34861"/>
<dbReference type="EMDB" id="EMD-34863"/>
<dbReference type="EMDB" id="EMD-34864"/>
<dbReference type="EMDB" id="EMD-34866"/>
<dbReference type="EMDB" id="EMD-34867"/>
<dbReference type="EMDB" id="EMD-34868"/>
<dbReference type="EMDB" id="EMD-34869"/>
<dbReference type="EMDB" id="EMD-34870"/>
<dbReference type="SMR" id="P41202"/>
<dbReference type="STRING" id="330779.Saci_0584"/>
<dbReference type="GeneID" id="14551105"/>
<dbReference type="KEGG" id="sai:Saci_0584"/>
<dbReference type="PATRIC" id="fig|330779.12.peg.563"/>
<dbReference type="eggNOG" id="arCOG04092">
    <property type="taxonomic scope" value="Archaea"/>
</dbReference>
<dbReference type="HOGENOM" id="CLU_061015_3_0_2"/>
<dbReference type="Proteomes" id="UP000001018">
    <property type="component" value="Chromosome"/>
</dbReference>
<dbReference type="GO" id="GO:1990904">
    <property type="term" value="C:ribonucleoprotein complex"/>
    <property type="evidence" value="ECO:0007669"/>
    <property type="project" value="UniProtKB-KW"/>
</dbReference>
<dbReference type="GO" id="GO:0005840">
    <property type="term" value="C:ribosome"/>
    <property type="evidence" value="ECO:0007669"/>
    <property type="project" value="UniProtKB-KW"/>
</dbReference>
<dbReference type="GO" id="GO:0019843">
    <property type="term" value="F:rRNA binding"/>
    <property type="evidence" value="ECO:0007669"/>
    <property type="project" value="UniProtKB-UniRule"/>
</dbReference>
<dbReference type="GO" id="GO:0003735">
    <property type="term" value="F:structural constituent of ribosome"/>
    <property type="evidence" value="ECO:0007669"/>
    <property type="project" value="InterPro"/>
</dbReference>
<dbReference type="GO" id="GO:0000049">
    <property type="term" value="F:tRNA binding"/>
    <property type="evidence" value="ECO:0007669"/>
    <property type="project" value="UniProtKB-UniRule"/>
</dbReference>
<dbReference type="GO" id="GO:0006412">
    <property type="term" value="P:translation"/>
    <property type="evidence" value="ECO:0007669"/>
    <property type="project" value="UniProtKB-UniRule"/>
</dbReference>
<dbReference type="FunFam" id="3.30.1440.10:FF:000002">
    <property type="entry name" value="60S ribosomal protein L11"/>
    <property type="match status" value="1"/>
</dbReference>
<dbReference type="Gene3D" id="3.30.1440.10">
    <property type="match status" value="1"/>
</dbReference>
<dbReference type="HAMAP" id="MF_01333_A">
    <property type="entry name" value="Ribosomal_uL5_A"/>
    <property type="match status" value="1"/>
</dbReference>
<dbReference type="InterPro" id="IPR002132">
    <property type="entry name" value="Ribosomal_uL5"/>
</dbReference>
<dbReference type="InterPro" id="IPR022804">
    <property type="entry name" value="Ribosomal_uL5_arc"/>
</dbReference>
<dbReference type="InterPro" id="IPR031309">
    <property type="entry name" value="Ribosomal_uL5_C"/>
</dbReference>
<dbReference type="InterPro" id="IPR020929">
    <property type="entry name" value="Ribosomal_uL5_CS"/>
</dbReference>
<dbReference type="InterPro" id="IPR022803">
    <property type="entry name" value="Ribosomal_uL5_dom_sf"/>
</dbReference>
<dbReference type="InterPro" id="IPR031310">
    <property type="entry name" value="Ribosomal_uL5_N"/>
</dbReference>
<dbReference type="NCBIfam" id="NF003258">
    <property type="entry name" value="PRK04219.1"/>
    <property type="match status" value="1"/>
</dbReference>
<dbReference type="PANTHER" id="PTHR11994">
    <property type="entry name" value="60S RIBOSOMAL PROTEIN L11-RELATED"/>
    <property type="match status" value="1"/>
</dbReference>
<dbReference type="Pfam" id="PF00281">
    <property type="entry name" value="Ribosomal_L5"/>
    <property type="match status" value="1"/>
</dbReference>
<dbReference type="Pfam" id="PF00673">
    <property type="entry name" value="Ribosomal_L5_C"/>
    <property type="match status" value="1"/>
</dbReference>
<dbReference type="PIRSF" id="PIRSF002161">
    <property type="entry name" value="Ribosomal_L5"/>
    <property type="match status" value="1"/>
</dbReference>
<dbReference type="SUPFAM" id="SSF55282">
    <property type="entry name" value="RL5-like"/>
    <property type="match status" value="1"/>
</dbReference>
<dbReference type="PROSITE" id="PS00358">
    <property type="entry name" value="RIBOSOMAL_L5"/>
    <property type="match status" value="1"/>
</dbReference>
<gene>
    <name evidence="1" type="primary">rpl5</name>
    <name type="ordered locus">Saci_0584</name>
</gene>
<name>RL5_SULAC</name>
<proteinExistence type="evidence at protein level"/>
<accession>P41202</accession>
<accession>Q4JB53</accession>
<protein>
    <recommendedName>
        <fullName evidence="1">Large ribosomal subunit protein uL5</fullName>
    </recommendedName>
    <alternativeName>
        <fullName evidence="2">50S ribosomal protein L5</fullName>
    </alternativeName>
</protein>
<evidence type="ECO:0000255" key="1">
    <source>
        <dbReference type="HAMAP-Rule" id="MF_01333"/>
    </source>
</evidence>
<evidence type="ECO:0000305" key="2"/>
<keyword id="KW-0002">3D-structure</keyword>
<keyword id="KW-1185">Reference proteome</keyword>
<keyword id="KW-0687">Ribonucleoprotein</keyword>
<keyword id="KW-0689">Ribosomal protein</keyword>
<keyword id="KW-0694">RNA-binding</keyword>
<keyword id="KW-0699">rRNA-binding</keyword>
<keyword id="KW-0820">tRNA-binding</keyword>
<comment type="function">
    <text evidence="1">This is one of the proteins that bind and probably mediate the attachment of the 5S RNA into the large ribosomal subunit, where it forms part of the central protuberance. In the 70S ribosome it contacts protein S13 of the 30S subunit (bridge B1b), connecting the 2 subunits; this bridge is implicated in subunit movement. May contact the P site tRNA; the 5S rRNA and some of its associated proteins might help stabilize positioning of ribosome-bound tRNAs.</text>
</comment>
<comment type="subunit">
    <text evidence="1">Part of the 50S ribosomal subunit; contacts the 5S rRNA and probably tRNA. Forms a bridge to the 30S subunit in the 70S ribosome.</text>
</comment>
<comment type="similarity">
    <text evidence="1">Belongs to the universal ribosomal protein uL5 family.</text>
</comment>
<feature type="chain" id="PRO_0000125068" description="Large ribosomal subunit protein uL5">
    <location>
        <begin position="1"/>
        <end position="178"/>
    </location>
</feature>